<reference key="1">
    <citation type="submission" date="1998-10" db="EMBL/GenBank/DDBJ databases">
        <title>Genetic transformation of a Rhizomucor pusillus mutant defective in asparagine-linked glycosylation: overproduction of a milk-clotting enzyme.</title>
        <authorList>
            <person name="Yamazaki H."/>
            <person name="Ohnishi Y."/>
            <person name="Horinouchi S."/>
        </authorList>
    </citation>
    <scope>NUCLEOTIDE SEQUENCE [GENOMIC DNA]</scope>
    <source>
        <strain>F27</strain>
    </source>
</reference>
<comment type="catalytic activity">
    <reaction evidence="2">
        <text>orotidine 5'-phosphate + H(+) = UMP + CO2</text>
        <dbReference type="Rhea" id="RHEA:11596"/>
        <dbReference type="ChEBI" id="CHEBI:15378"/>
        <dbReference type="ChEBI" id="CHEBI:16526"/>
        <dbReference type="ChEBI" id="CHEBI:57538"/>
        <dbReference type="ChEBI" id="CHEBI:57865"/>
        <dbReference type="EC" id="4.1.1.23"/>
    </reaction>
</comment>
<comment type="pathway">
    <text>Pyrimidine metabolism; UMP biosynthesis via de novo pathway; UMP from orotate: step 2/2.</text>
</comment>
<comment type="similarity">
    <text evidence="3">Belongs to the OMP decarboxylase family.</text>
</comment>
<protein>
    <recommendedName>
        <fullName>Orotidine 5'-phosphate decarboxylase</fullName>
        <ecNumber>4.1.1.23</ecNumber>
    </recommendedName>
    <alternativeName>
        <fullName>OMP decarboxylase</fullName>
        <shortName>OMPDCase</shortName>
        <shortName>OMPdecase</shortName>
    </alternativeName>
    <alternativeName>
        <fullName>Uridine 5'-monophosphate synthase</fullName>
        <shortName>UMP synthase</shortName>
    </alternativeName>
</protein>
<proteinExistence type="inferred from homology"/>
<organism>
    <name type="scientific">Rhizomucor pusillus</name>
    <dbReference type="NCBI Taxonomy" id="4840"/>
    <lineage>
        <taxon>Eukaryota</taxon>
        <taxon>Fungi</taxon>
        <taxon>Fungi incertae sedis</taxon>
        <taxon>Mucoromycota</taxon>
        <taxon>Mucoromycotina</taxon>
        <taxon>Mucoromycetes</taxon>
        <taxon>Mucorales</taxon>
        <taxon>Lichtheimiaceae</taxon>
        <taxon>Rhizomucor</taxon>
    </lineage>
</organism>
<feature type="chain" id="PRO_0000134678" description="Orotidine 5'-phosphate decarboxylase">
    <location>
        <begin position="1"/>
        <end position="263"/>
    </location>
</feature>
<feature type="active site" description="Proton donor" evidence="2">
    <location>
        <position position="93"/>
    </location>
</feature>
<feature type="binding site" evidence="1">
    <location>
        <position position="38"/>
    </location>
    <ligand>
        <name>substrate</name>
    </ligand>
</feature>
<feature type="binding site" evidence="1">
    <location>
        <begin position="60"/>
        <end position="62"/>
    </location>
    <ligand>
        <name>substrate</name>
    </ligand>
</feature>
<feature type="binding site" evidence="1">
    <location>
        <begin position="91"/>
        <end position="100"/>
    </location>
    <ligand>
        <name>substrate</name>
    </ligand>
</feature>
<feature type="binding site" evidence="1">
    <location>
        <position position="213"/>
    </location>
    <ligand>
        <name>substrate</name>
    </ligand>
</feature>
<feature type="binding site" evidence="1">
    <location>
        <position position="232"/>
    </location>
    <ligand>
        <name>substrate</name>
    </ligand>
</feature>
<name>PYRF_RHIPU</name>
<dbReference type="EC" id="4.1.1.23"/>
<dbReference type="EMBL" id="AB019045">
    <property type="protein sequence ID" value="BAA76616.1"/>
    <property type="molecule type" value="Genomic_DNA"/>
</dbReference>
<dbReference type="SMR" id="Q9Y720"/>
<dbReference type="UniPathway" id="UPA00070">
    <property type="reaction ID" value="UER00120"/>
</dbReference>
<dbReference type="GO" id="GO:0004588">
    <property type="term" value="F:orotate phosphoribosyltransferase activity"/>
    <property type="evidence" value="ECO:0007669"/>
    <property type="project" value="TreeGrafter"/>
</dbReference>
<dbReference type="GO" id="GO:0004590">
    <property type="term" value="F:orotidine-5'-phosphate decarboxylase activity"/>
    <property type="evidence" value="ECO:0007669"/>
    <property type="project" value="UniProtKB-EC"/>
</dbReference>
<dbReference type="GO" id="GO:0006207">
    <property type="term" value="P:'de novo' pyrimidine nucleobase biosynthetic process"/>
    <property type="evidence" value="ECO:0007669"/>
    <property type="project" value="InterPro"/>
</dbReference>
<dbReference type="GO" id="GO:0044205">
    <property type="term" value="P:'de novo' UMP biosynthetic process"/>
    <property type="evidence" value="ECO:0007669"/>
    <property type="project" value="UniProtKB-UniPathway"/>
</dbReference>
<dbReference type="CDD" id="cd04725">
    <property type="entry name" value="OMP_decarboxylase_like"/>
    <property type="match status" value="1"/>
</dbReference>
<dbReference type="FunFam" id="3.20.20.70:FF:000114">
    <property type="entry name" value="Decarboxylase,orotidine phosphate"/>
    <property type="match status" value="1"/>
</dbReference>
<dbReference type="Gene3D" id="3.20.20.70">
    <property type="entry name" value="Aldolase class I"/>
    <property type="match status" value="1"/>
</dbReference>
<dbReference type="InterPro" id="IPR013785">
    <property type="entry name" value="Aldolase_TIM"/>
</dbReference>
<dbReference type="InterPro" id="IPR014732">
    <property type="entry name" value="OMPdecase"/>
</dbReference>
<dbReference type="InterPro" id="IPR018089">
    <property type="entry name" value="OMPdecase_AS"/>
</dbReference>
<dbReference type="InterPro" id="IPR001754">
    <property type="entry name" value="OMPdeCOase_dom"/>
</dbReference>
<dbReference type="InterPro" id="IPR011060">
    <property type="entry name" value="RibuloseP-bd_barrel"/>
</dbReference>
<dbReference type="NCBIfam" id="TIGR01740">
    <property type="entry name" value="pyrF"/>
    <property type="match status" value="1"/>
</dbReference>
<dbReference type="PANTHER" id="PTHR19278">
    <property type="entry name" value="OROTATE PHOSPHORIBOSYLTRANSFERASE"/>
    <property type="match status" value="1"/>
</dbReference>
<dbReference type="PANTHER" id="PTHR19278:SF9">
    <property type="entry name" value="URIDINE 5'-MONOPHOSPHATE SYNTHASE"/>
    <property type="match status" value="1"/>
</dbReference>
<dbReference type="Pfam" id="PF00215">
    <property type="entry name" value="OMPdecase"/>
    <property type="match status" value="1"/>
</dbReference>
<dbReference type="SMART" id="SM00934">
    <property type="entry name" value="OMPdecase"/>
    <property type="match status" value="1"/>
</dbReference>
<dbReference type="SUPFAM" id="SSF51366">
    <property type="entry name" value="Ribulose-phoshate binding barrel"/>
    <property type="match status" value="1"/>
</dbReference>
<dbReference type="PROSITE" id="PS00156">
    <property type="entry name" value="OMPDECASE"/>
    <property type="match status" value="1"/>
</dbReference>
<gene>
    <name type="primary">PYR4</name>
</gene>
<sequence>MNTFKTYADRAARHPNGCAKALFELMERKQTNLSIAADVTTKKELLHIADACGPYICILKTHIDIIDDFDEDLVAQLCELAKKHDFLLFEDRKFADIGNTVKHQYGKGVYKIASWAHITNAHTVPGEGIITGLREVGLPLGRGLLLLAEMSSKGALTKGSYTTESVEMARRNQDFVFGFIAQHKMNEKDDEDFVVMAPGVGLDVKGDGLGQQYRTPYQVIVESGCDVIIVGRGIYGNPDQIEFQAKRYKEAGWNAYLERVQKH</sequence>
<evidence type="ECO:0000250" key="1"/>
<evidence type="ECO:0000255" key="2">
    <source>
        <dbReference type="PROSITE-ProRule" id="PRU10110"/>
    </source>
</evidence>
<evidence type="ECO:0000305" key="3"/>
<keyword id="KW-0210">Decarboxylase</keyword>
<keyword id="KW-0456">Lyase</keyword>
<keyword id="KW-0665">Pyrimidine biosynthesis</keyword>
<accession>Q9Y720</accession>